<organism>
    <name type="scientific">Chlorocebus aethiops</name>
    <name type="common">Green monkey</name>
    <name type="synonym">Cercopithecus aethiops</name>
    <dbReference type="NCBI Taxonomy" id="9534"/>
    <lineage>
        <taxon>Eukaryota</taxon>
        <taxon>Metazoa</taxon>
        <taxon>Chordata</taxon>
        <taxon>Craniata</taxon>
        <taxon>Vertebrata</taxon>
        <taxon>Euteleostomi</taxon>
        <taxon>Mammalia</taxon>
        <taxon>Eutheria</taxon>
        <taxon>Euarchontoglires</taxon>
        <taxon>Primates</taxon>
        <taxon>Haplorrhini</taxon>
        <taxon>Catarrhini</taxon>
        <taxon>Cercopithecidae</taxon>
        <taxon>Cercopithecinae</taxon>
        <taxon>Chlorocebus</taxon>
    </lineage>
</organism>
<sequence length="466" mass="53709">MTTRSVSSSSYRRMFGGPGTASRPSSSRSYVTTSTRTYSLGSALRPSTSRSLYASSPGGVYATRSSAVRLRSSVPGVRLLQDSVDFSLADAINTEFKNTRTNEKVELQELNDRFANYIDKVRFLEQQNKILLAELEQLKGQGKSRLGDLYEEEMRELRRQVDQLTNDKARVEVERDNLTEDIMRLREKLQEEMLQREEAENTLQSFRQDVDNASLARLDLERKVESLQEEIAFLKKLHEEEIQELQAQIQEQHVQIDVDVSKPDLTAALRDVRQQYESVAAKNLQEAEEWYKSKFADLSEAANRNNDALRQAKQESNEYRRQVQSLTCEVDALKGTNESLERQMREMEENFAVEAANYQDTIGRLQDEIQNMKEEMARHLREYQDLLNVKMALDIEIATYRKLLEGEESRISLPLPNFSSLNLRETNLDSLPLVDTHSKRTLLIKTVETRDGQVINETSQHHDDLE</sequence>
<dbReference type="EMBL" id="DQ190949">
    <property type="protein sequence ID" value="ABA39528.1"/>
    <property type="molecule type" value="mRNA"/>
</dbReference>
<dbReference type="SMR" id="P84198"/>
<dbReference type="IntAct" id="P84198">
    <property type="interactions" value="2"/>
</dbReference>
<dbReference type="MINT" id="P84198"/>
<dbReference type="GlyCosmos" id="P84198">
    <property type="glycosylation" value="3 sites, No reported glycans"/>
</dbReference>
<dbReference type="iPTMnet" id="P84198"/>
<dbReference type="GO" id="GO:0030424">
    <property type="term" value="C:axon"/>
    <property type="evidence" value="ECO:0007669"/>
    <property type="project" value="TreeGrafter"/>
</dbReference>
<dbReference type="GO" id="GO:0005737">
    <property type="term" value="C:cytoplasm"/>
    <property type="evidence" value="ECO:0000250"/>
    <property type="project" value="UniProtKB"/>
</dbReference>
<dbReference type="GO" id="GO:0005882">
    <property type="term" value="C:intermediate filament"/>
    <property type="evidence" value="ECO:0000250"/>
    <property type="project" value="UniProtKB"/>
</dbReference>
<dbReference type="GO" id="GO:0016363">
    <property type="term" value="C:nuclear matrix"/>
    <property type="evidence" value="ECO:0007669"/>
    <property type="project" value="UniProtKB-SubCell"/>
</dbReference>
<dbReference type="GO" id="GO:0005886">
    <property type="term" value="C:plasma membrane"/>
    <property type="evidence" value="ECO:0000250"/>
    <property type="project" value="UniProtKB"/>
</dbReference>
<dbReference type="GO" id="GO:0005200">
    <property type="term" value="F:structural constituent of cytoskeleton"/>
    <property type="evidence" value="ECO:0000250"/>
    <property type="project" value="UniProtKB"/>
</dbReference>
<dbReference type="GO" id="GO:0071222">
    <property type="term" value="P:cellular response to lipopolysaccharide"/>
    <property type="evidence" value="ECO:0000250"/>
    <property type="project" value="UniProtKB"/>
</dbReference>
<dbReference type="GO" id="GO:0071225">
    <property type="term" value="P:cellular response to muramyl dipeptide"/>
    <property type="evidence" value="ECO:0000250"/>
    <property type="project" value="UniProtKB"/>
</dbReference>
<dbReference type="GO" id="GO:0045109">
    <property type="term" value="P:intermediate filament organization"/>
    <property type="evidence" value="ECO:0000250"/>
    <property type="project" value="UniProtKB"/>
</dbReference>
<dbReference type="GO" id="GO:0010634">
    <property type="term" value="P:positive regulation of epithelial cell migration"/>
    <property type="evidence" value="ECO:0000250"/>
    <property type="project" value="UniProtKB"/>
</dbReference>
<dbReference type="FunFam" id="1.20.5.1160:FF:000001">
    <property type="entry name" value="Keratin type II"/>
    <property type="match status" value="1"/>
</dbReference>
<dbReference type="FunFam" id="1.20.5.170:FF:000002">
    <property type="entry name" value="Type I keratin KA11"/>
    <property type="match status" value="1"/>
</dbReference>
<dbReference type="FunFam" id="1.20.5.500:FF:000001">
    <property type="entry name" value="Type II keratin 23"/>
    <property type="match status" value="1"/>
</dbReference>
<dbReference type="Gene3D" id="1.20.5.170">
    <property type="match status" value="1"/>
</dbReference>
<dbReference type="Gene3D" id="1.20.5.500">
    <property type="entry name" value="Single helix bin"/>
    <property type="match status" value="1"/>
</dbReference>
<dbReference type="Gene3D" id="1.20.5.1160">
    <property type="entry name" value="Vasodilator-stimulated phosphoprotein"/>
    <property type="match status" value="1"/>
</dbReference>
<dbReference type="InterPro" id="IPR018039">
    <property type="entry name" value="IF_conserved"/>
</dbReference>
<dbReference type="InterPro" id="IPR039008">
    <property type="entry name" value="IF_rod_dom"/>
</dbReference>
<dbReference type="InterPro" id="IPR006821">
    <property type="entry name" value="Intermed_filament_DNA-bd"/>
</dbReference>
<dbReference type="InterPro" id="IPR050405">
    <property type="entry name" value="Intermediate_filament"/>
</dbReference>
<dbReference type="PANTHER" id="PTHR45652">
    <property type="entry name" value="GLIAL FIBRILLARY ACIDIC PROTEIN"/>
    <property type="match status" value="1"/>
</dbReference>
<dbReference type="PANTHER" id="PTHR45652:SF5">
    <property type="entry name" value="VIMENTIN"/>
    <property type="match status" value="1"/>
</dbReference>
<dbReference type="Pfam" id="PF00038">
    <property type="entry name" value="Filament"/>
    <property type="match status" value="1"/>
</dbReference>
<dbReference type="Pfam" id="PF04732">
    <property type="entry name" value="Filament_head"/>
    <property type="match status" value="1"/>
</dbReference>
<dbReference type="SMART" id="SM01391">
    <property type="entry name" value="Filament"/>
    <property type="match status" value="1"/>
</dbReference>
<dbReference type="SUPFAM" id="SSF64593">
    <property type="entry name" value="Intermediate filament protein, coiled coil region"/>
    <property type="match status" value="2"/>
</dbReference>
<dbReference type="PROSITE" id="PS00226">
    <property type="entry name" value="IF_ROD_1"/>
    <property type="match status" value="1"/>
</dbReference>
<dbReference type="PROSITE" id="PS51842">
    <property type="entry name" value="IF_ROD_2"/>
    <property type="match status" value="1"/>
</dbReference>
<name>VIME_CHLAE</name>
<keyword id="KW-0007">Acetylation</keyword>
<keyword id="KW-1003">Cell membrane</keyword>
<keyword id="KW-0175">Coiled coil</keyword>
<keyword id="KW-0963">Cytoplasm</keyword>
<keyword id="KW-0206">Cytoskeleton</keyword>
<keyword id="KW-0903">Direct protein sequencing</keyword>
<keyword id="KW-0325">Glycoprotein</keyword>
<keyword id="KW-0403">Intermediate filament</keyword>
<keyword id="KW-1017">Isopeptide bond</keyword>
<keyword id="KW-0472">Membrane</keyword>
<keyword id="KW-0539">Nucleus</keyword>
<keyword id="KW-0597">Phosphoprotein</keyword>
<keyword id="KW-0702">S-nitrosylation</keyword>
<keyword id="KW-0832">Ubl conjugation</keyword>
<proteinExistence type="evidence at protein level"/>
<reference key="1">
    <citation type="journal article" date="2006" name="J. Virol.">
        <title>Defining the cellular target(s) of porcine reproductive and respiratory syndrome virus blocking monoclonal antibody 7G10.</title>
        <authorList>
            <person name="Kim J.-K."/>
            <person name="Fahad A.M."/>
            <person name="Shanmukhappa K."/>
            <person name="Kapil S."/>
        </authorList>
    </citation>
    <scope>NUCLEOTIDE SEQUENCE [MRNA]</scope>
</reference>
<reference evidence="9" key="2">
    <citation type="journal article" date="2000" name="J. Biol. Chem.">
        <title>Calyculin A-induced vimentin phosphorylation sequesters 14-3-3 and displaces other 14-3-3 partners in vivo.</title>
        <authorList>
            <person name="Tzivion G."/>
            <person name="Luo Z.-J."/>
            <person name="Avruch J."/>
        </authorList>
    </citation>
    <scope>PROTEIN SEQUENCE OF 144-168 AND 335-359</scope>
    <scope>PHOSPHORYLATION</scope>
</reference>
<reference key="3">
    <citation type="journal article" date="2007" name="Proc. Natl. Acad. Sci. U.S.A.">
        <title>Profiling signaling polarity in chemotactic cells.</title>
        <authorList>
            <person name="Wang Y."/>
            <person name="Ding S.-J."/>
            <person name="Wang W."/>
            <person name="Jacobs J.M."/>
            <person name="Qian W.-J."/>
            <person name="Moore R.J."/>
            <person name="Yang F."/>
            <person name="Camp D.G. II"/>
            <person name="Smith R.D."/>
            <person name="Klemke R.L."/>
        </authorList>
    </citation>
    <scope>PHOSPHORYLATION [LARGE SCALE ANALYSIS] AT SER-51 AND SER-412</scope>
    <scope>IDENTIFICATION BY MASS SPECTROMETRY</scope>
</reference>
<protein>
    <recommendedName>
        <fullName>Vimentin</fullName>
    </recommendedName>
</protein>
<accession>P84198</accession>
<accession>Q3HWE4</accession>
<evidence type="ECO:0000250" key="1"/>
<evidence type="ECO:0000250" key="2">
    <source>
        <dbReference type="UniProtKB" id="A0A8C0N8E3"/>
    </source>
</evidence>
<evidence type="ECO:0000250" key="3">
    <source>
        <dbReference type="UniProtKB" id="P08670"/>
    </source>
</evidence>
<evidence type="ECO:0000250" key="4">
    <source>
        <dbReference type="UniProtKB" id="P20152"/>
    </source>
</evidence>
<evidence type="ECO:0000250" key="5">
    <source>
        <dbReference type="UniProtKB" id="P31000"/>
    </source>
</evidence>
<evidence type="ECO:0000255" key="6">
    <source>
        <dbReference type="PROSITE-ProRule" id="PRU01188"/>
    </source>
</evidence>
<evidence type="ECO:0000256" key="7">
    <source>
        <dbReference type="SAM" id="MobiDB-lite"/>
    </source>
</evidence>
<evidence type="ECO:0000269" key="8">
    <source>
    </source>
</evidence>
<evidence type="ECO:0000305" key="9"/>
<gene>
    <name type="primary">VIM</name>
</gene>
<comment type="function">
    <text evidence="2 5">Vimentins are class-III intermediate filaments found in various non-epithelial cells, especially mesenchymal cells. Vimentin is attached to the nucleus, endoplasmic reticulum, and mitochondria, either laterally or terminally. Plays a role in cell directional movement, orientation, cell sheet organization and Golgi complex polarization at the cell migration front (By similarity). Protects SCRIB from proteasomal degradation and facilitates its localization to intermediate filaments in a cell contact-mediated manner (By similarity).</text>
</comment>
<comment type="function">
    <text evidence="3">Involved with LARP6 in the stabilization of type I collagen mRNAs for CO1A1 and CO1A2.</text>
</comment>
<comment type="subunit">
    <text evidence="3 4 5">Homomer assembled from elementary dimers (By similarity). Identified in complexes that contain VIM, EZR, AHNAK, BFSP1, BFSP2, ANK2, PLEC, PRX and spectrin (By similarity). Interacts with BCAS3 (By similarity). Interacts with LGSN (By similarity). Interacts with SYNM (By similarity). Interacts (via rod region) with PLEC (via CH 1 domain) (By similarity). Interacts with STK33 (By similarity). Interacts with LARP6 (By similarity). Interacts with RAB8B (By similarity). Interacts with TOR1A; the interaction associates TOR1A with the cytoskeleton. Interacts with TOR1AIP1 (By similarity). Interacts with TOR1AIP1 (By similarity). Interacts with DIAPH1 (By similarity). Interacts with EPPK1; interaction is dependent of higher-order structure of intermediate filament (By similarity). Interacts with the non-receptor tyrosine kinase SRMS; the interaction leads to phosphorylation of VIM (By similarity). Interacts with NOD2 (By similarity). Interacts (via head region) with CORO1C (By similarity). Interacts with HDGF (By similarity). Interacts with PRKCE (via phorbol-ester/DAG-type 2 domain) (By similarity). Interacts with BFSP2 (By similarity). Interacts with PPL (By similarity). Interacts with PKP1 and PKP2 (By similarity). Interacts with SCRIB (via PDZ domains); the interaction protects SCRIB from proteasomal degradation and facilitates SCRIB localization to intermediate filaments, the interaction is reduced by cell contact inhibition (By similarity).</text>
</comment>
<comment type="subcellular location">
    <subcellularLocation>
        <location evidence="3">Cytoplasm</location>
    </subcellularLocation>
    <subcellularLocation>
        <location evidence="3">Cytoplasm</location>
        <location evidence="3">Cytoskeleton</location>
    </subcellularLocation>
    <subcellularLocation>
        <location evidence="5">Nucleus matrix</location>
    </subcellularLocation>
    <subcellularLocation>
        <location evidence="4">Cell membrane</location>
    </subcellularLocation>
</comment>
<comment type="domain">
    <text evidence="3">The central alpha-helical coiled-coil IF rod domain mediates elementary homodimerization.</text>
</comment>
<comment type="domain">
    <text evidence="3">The [IL]-x-C-x-x-[DE] motif is a proposed target motif for cysteine S-nitrosylation mediated by the iNOS-S100A8/A9 transnitrosylase complex.</text>
</comment>
<comment type="PTM">
    <text evidence="3 5">Phosphorylation by PKN1 inhibits the formation of filaments. Filament disassembly during mitosis is promoted by phosphorylation at Ser-55 as well as by nestin. One of the most prominent phosphoproteins in various cells of mesenchymal origin. Phosphorylation is enhanced during cell division, at which time vimentin filaments are significantly reorganized. Phosphorylated at Ser-56 by CDK5 during neutrophil secretion in the cytoplasm. Phosphorylated by STK33. Phosphorylated on tyrosine residues by SRMS.</text>
</comment>
<comment type="PTM">
    <text evidence="3">S-nitrosylation is induced by interferon-gamma and oxidatively-modified low-densitity lipoprotein (LDL(ox)) possibly implicating the iNOS-S100A8/9 transnitrosylase complex.</text>
</comment>
<comment type="similarity">
    <text evidence="6">Belongs to the intermediate filament family.</text>
</comment>
<feature type="chain" id="PRO_0000063752" description="Vimentin">
    <location>
        <begin position="1"/>
        <end position="466"/>
    </location>
</feature>
<feature type="domain" description="IF rod" evidence="6">
    <location>
        <begin position="103"/>
        <end position="411"/>
    </location>
</feature>
<feature type="region of interest" description="Head">
    <location>
        <begin position="1"/>
        <end position="95"/>
    </location>
</feature>
<feature type="region of interest" description="Disordered" evidence="7">
    <location>
        <begin position="1"/>
        <end position="30"/>
    </location>
</feature>
<feature type="region of interest" description="Coil 1A">
    <location>
        <begin position="96"/>
        <end position="131"/>
    </location>
</feature>
<feature type="region of interest" description="Linker 1">
    <location>
        <begin position="132"/>
        <end position="153"/>
    </location>
</feature>
<feature type="region of interest" description="Coil 1B">
    <location>
        <begin position="154"/>
        <end position="245"/>
    </location>
</feature>
<feature type="region of interest" description="Linker 12">
    <location>
        <begin position="246"/>
        <end position="268"/>
    </location>
</feature>
<feature type="region of interest" description="Coil 2">
    <location>
        <begin position="269"/>
        <end position="407"/>
    </location>
</feature>
<feature type="region of interest" description="Tail">
    <location>
        <begin position="408"/>
        <end position="466"/>
    </location>
</feature>
<feature type="coiled-coil region">
    <location>
        <begin position="96"/>
        <end position="131"/>
    </location>
</feature>
<feature type="coiled-coil region">
    <location>
        <begin position="154"/>
        <end position="245"/>
    </location>
</feature>
<feature type="coiled-coil region">
    <location>
        <begin position="303"/>
        <end position="407"/>
    </location>
</feature>
<feature type="short sequence motif" description="[IL]-x-C-x-x-[DE] motif" evidence="3">
    <location>
        <begin position="326"/>
        <end position="329"/>
    </location>
</feature>
<feature type="compositionally biased region" description="Low complexity" evidence="7">
    <location>
        <begin position="1"/>
        <end position="13"/>
    </location>
</feature>
<feature type="compositionally biased region" description="Low complexity" evidence="7">
    <location>
        <begin position="20"/>
        <end position="30"/>
    </location>
</feature>
<feature type="site" description="Stutter" evidence="1">
    <location>
        <position position="351"/>
    </location>
</feature>
<feature type="modified residue" description="Phosphoserine" evidence="3">
    <location>
        <position position="5"/>
    </location>
</feature>
<feature type="modified residue" description="Phosphoserine; alternate" evidence="3">
    <location>
        <position position="7"/>
    </location>
</feature>
<feature type="modified residue" description="Phosphoserine" evidence="3">
    <location>
        <position position="8"/>
    </location>
</feature>
<feature type="modified residue" description="Phosphoserine" evidence="3">
    <location>
        <position position="9"/>
    </location>
</feature>
<feature type="modified residue" description="Phosphoserine" evidence="3">
    <location>
        <position position="10"/>
    </location>
</feature>
<feature type="modified residue" description="Phosphothreonine" evidence="3">
    <location>
        <position position="20"/>
    </location>
</feature>
<feature type="modified residue" description="Phosphoserine" evidence="4">
    <location>
        <position position="25"/>
    </location>
</feature>
<feature type="modified residue" description="Phosphoserine" evidence="4">
    <location>
        <position position="26"/>
    </location>
</feature>
<feature type="modified residue" description="Phosphoserine; by PKC; alternate" evidence="3">
    <location>
        <position position="34"/>
    </location>
</feature>
<feature type="modified residue" description="Phosphoserine; by CaMK2, PKA, PKC and ROCK2" evidence="3">
    <location>
        <position position="39"/>
    </location>
</feature>
<feature type="modified residue" description="Phosphoserine" evidence="3">
    <location>
        <position position="42"/>
    </location>
</feature>
<feature type="modified residue" description="Phosphoserine" evidence="4">
    <location>
        <position position="47"/>
    </location>
</feature>
<feature type="modified residue" description="Phosphoserine" evidence="3">
    <location>
        <position position="49"/>
    </location>
</feature>
<feature type="modified residue" description="Phosphoserine" evidence="8">
    <location>
        <position position="51"/>
    </location>
</feature>
<feature type="modified residue" description="Phosphotyrosine" evidence="4">
    <location>
        <position position="53"/>
    </location>
</feature>
<feature type="modified residue" description="Phosphoserine" evidence="5">
    <location>
        <position position="55"/>
    </location>
</feature>
<feature type="modified residue" description="Phosphoserine; by CDK5 and CDK1" evidence="3">
    <location>
        <position position="56"/>
    </location>
</feature>
<feature type="modified residue" description="Phosphotyrosine" evidence="3">
    <location>
        <position position="61"/>
    </location>
</feature>
<feature type="modified residue" description="Phosphoserine" evidence="4">
    <location>
        <position position="66"/>
    </location>
</feature>
<feature type="modified residue" description="Phosphoserine; by AURKB and ROCK2" evidence="3">
    <location>
        <position position="72"/>
    </location>
</feature>
<feature type="modified residue" description="Phosphoserine" evidence="3">
    <location>
        <position position="73"/>
    </location>
</feature>
<feature type="modified residue" description="Phosphoserine" evidence="4">
    <location>
        <position position="83"/>
    </location>
</feature>
<feature type="modified residue" description="Phosphoserine" evidence="3">
    <location>
        <position position="87"/>
    </location>
</feature>
<feature type="modified residue" description="Phosphotyrosine" evidence="3">
    <location>
        <position position="117"/>
    </location>
</feature>
<feature type="modified residue" description="N6-acetyllysine; alternate" evidence="3">
    <location>
        <position position="120"/>
    </location>
</feature>
<feature type="modified residue" description="N6-succinyllysine; alternate" evidence="4">
    <location>
        <position position="120"/>
    </location>
</feature>
<feature type="modified residue" description="N6-acetyllysine; alternate" evidence="4">
    <location>
        <position position="129"/>
    </location>
</feature>
<feature type="modified residue" description="N6-succinyllysine; alternate" evidence="4">
    <location>
        <position position="129"/>
    </location>
</feature>
<feature type="modified residue" description="N6-acetyllysine; alternate" evidence="3">
    <location>
        <position position="139"/>
    </location>
</feature>
<feature type="modified residue" description="Phosphoserine" evidence="3">
    <location>
        <position position="144"/>
    </location>
</feature>
<feature type="modified residue" description="N6-acetyllysine" evidence="4">
    <location>
        <position position="168"/>
    </location>
</feature>
<feature type="modified residue" description="N6-acetyllysine; alternate" evidence="4">
    <location>
        <position position="188"/>
    </location>
</feature>
<feature type="modified residue" description="N6-succinyllysine; alternate" evidence="4">
    <location>
        <position position="188"/>
    </location>
</feature>
<feature type="modified residue" description="Phosphoserine" evidence="3">
    <location>
        <position position="214"/>
    </location>
</feature>
<feature type="modified residue" description="N6-acetyllysine; alternate" evidence="4">
    <location>
        <position position="223"/>
    </location>
</feature>
<feature type="modified residue" description="Phosphoserine" evidence="3">
    <location>
        <position position="226"/>
    </location>
</feature>
<feature type="modified residue" description="N6-acetyllysine" evidence="4">
    <location>
        <position position="235"/>
    </location>
</feature>
<feature type="modified residue" description="N6-acetyllysine; alternate" evidence="4">
    <location>
        <position position="294"/>
    </location>
</feature>
<feature type="modified residue" description="N6-succinyllysine; alternate" evidence="4">
    <location>
        <position position="294"/>
    </location>
</feature>
<feature type="modified residue" description="Phosphoserine" evidence="3">
    <location>
        <position position="299"/>
    </location>
</feature>
<feature type="modified residue" description="Phosphoserine" evidence="4">
    <location>
        <position position="325"/>
    </location>
</feature>
<feature type="modified residue" description="N6-acetyllysine; alternate" evidence="3">
    <location>
        <position position="373"/>
    </location>
</feature>
<feature type="modified residue" description="Phosphoserine" evidence="3">
    <location>
        <position position="409"/>
    </location>
</feature>
<feature type="modified residue" description="Phosphoserine" evidence="8">
    <location>
        <position position="412"/>
    </location>
</feature>
<feature type="modified residue" description="Phosphoserine" evidence="3">
    <location>
        <position position="419"/>
    </location>
</feature>
<feature type="modified residue" description="Phosphoserine" evidence="3">
    <location>
        <position position="420"/>
    </location>
</feature>
<feature type="modified residue" description="Phosphothreonine" evidence="3">
    <location>
        <position position="426"/>
    </location>
</feature>
<feature type="modified residue" description="Phosphoserine" evidence="3">
    <location>
        <position position="430"/>
    </location>
</feature>
<feature type="modified residue" description="Phosphothreonine" evidence="3">
    <location>
        <position position="436"/>
    </location>
</feature>
<feature type="modified residue" description="Phosphoserine" evidence="3">
    <location>
        <position position="438"/>
    </location>
</feature>
<feature type="modified residue" description="N6-acetyllysine; alternate" evidence="3">
    <location>
        <position position="445"/>
    </location>
</feature>
<feature type="modified residue" description="N6-succinyllysine; alternate" evidence="4">
    <location>
        <position position="445"/>
    </location>
</feature>
<feature type="modified residue" description="Phosphothreonine" evidence="3">
    <location>
        <position position="446"/>
    </location>
</feature>
<feature type="modified residue" description="Phosphothreonine" evidence="3">
    <location>
        <position position="458"/>
    </location>
</feature>
<feature type="modified residue" description="Phosphoserine" evidence="3">
    <location>
        <position position="459"/>
    </location>
</feature>
<feature type="glycosylation site" description="O-linked (GlcNAc) serine; alternate" evidence="1">
    <location>
        <position position="7"/>
    </location>
</feature>
<feature type="glycosylation site" description="O-linked (GlcNAc) threonine" evidence="1">
    <location>
        <position position="33"/>
    </location>
</feature>
<feature type="glycosylation site" description="O-linked (GlcNAc) serine; alternate" evidence="1">
    <location>
        <position position="34"/>
    </location>
</feature>
<feature type="cross-link" description="Glycyl lysine isopeptide (Lys-Gly) (interchain with G-Cter in SUMO2)" evidence="3">
    <location>
        <position position="104"/>
    </location>
</feature>
<feature type="cross-link" description="Glycyl lysine isopeptide (Lys-Gly) (interchain with G-Cter in SUMO2); alternate" evidence="3">
    <location>
        <position position="120"/>
    </location>
</feature>
<feature type="cross-link" description="Glycyl lysine isopeptide (Lys-Gly) (interchain with G-Cter in SUMO2); alternate" evidence="3">
    <location>
        <position position="129"/>
    </location>
</feature>
<feature type="cross-link" description="Glycyl lysine isopeptide (Lys-Gly) (interchain with G-Cter in SUMO2); alternate" evidence="3">
    <location>
        <position position="139"/>
    </location>
</feature>
<feature type="cross-link" description="Glycyl lysine isopeptide (Lys-Gly) (interchain with G-Cter in SUMO2); alternate" evidence="3">
    <location>
        <position position="223"/>
    </location>
</feature>
<feature type="cross-link" description="Glycyl lysine isopeptide (Lys-Gly) (interchain with G-Cter in SUMO2)" evidence="3">
    <location>
        <position position="262"/>
    </location>
</feature>
<feature type="cross-link" description="Glycyl lysine isopeptide (Lys-Gly) (interchain with G-Cter in SUMO2); alternate" evidence="3">
    <location>
        <position position="294"/>
    </location>
</feature>
<feature type="cross-link" description="Glycyl lysine isopeptide (Lys-Gly) (interchain with G-Cter in SUMO2)" evidence="3">
    <location>
        <position position="313"/>
    </location>
</feature>
<feature type="cross-link" description="Glycyl lysine isopeptide (Lys-Gly) (interchain with G-Cter in SUMO2); alternate" evidence="3">
    <location>
        <position position="373"/>
    </location>
</feature>
<feature type="cross-link" description="Glycyl lysine isopeptide (Lys-Gly) (interchain with G-Cter in SUMO2)" evidence="3">
    <location>
        <position position="439"/>
    </location>
</feature>
<feature type="cross-link" description="Glycyl lysine isopeptide (Lys-Gly) (interchain with G-Cter in SUMO1); alternate" evidence="3">
    <location>
        <position position="445"/>
    </location>
</feature>
<feature type="cross-link" description="Glycyl lysine isopeptide (Lys-Gly) (interchain with G-Cter in SUMO2); alternate" evidence="3">
    <location>
        <position position="445"/>
    </location>
</feature>